<gene>
    <name evidence="1" type="primary">ycf4</name>
    <name type="ordered locus">SynWH7803_1646</name>
</gene>
<dbReference type="EMBL" id="CT971583">
    <property type="protein sequence ID" value="CAK24072.1"/>
    <property type="molecule type" value="Genomic_DNA"/>
</dbReference>
<dbReference type="STRING" id="32051.SynWH7803_1646"/>
<dbReference type="KEGG" id="syx:SynWH7803_1646"/>
<dbReference type="eggNOG" id="ENOG502Z7YX">
    <property type="taxonomic scope" value="Bacteria"/>
</dbReference>
<dbReference type="HOGENOM" id="CLU_095465_0_0_3"/>
<dbReference type="OrthoDB" id="7059574at2"/>
<dbReference type="Proteomes" id="UP000001566">
    <property type="component" value="Chromosome"/>
</dbReference>
<dbReference type="GO" id="GO:0009522">
    <property type="term" value="C:photosystem I"/>
    <property type="evidence" value="ECO:0007669"/>
    <property type="project" value="InterPro"/>
</dbReference>
<dbReference type="GO" id="GO:0031676">
    <property type="term" value="C:plasma membrane-derived thylakoid membrane"/>
    <property type="evidence" value="ECO:0007669"/>
    <property type="project" value="UniProtKB-SubCell"/>
</dbReference>
<dbReference type="GO" id="GO:0015979">
    <property type="term" value="P:photosynthesis"/>
    <property type="evidence" value="ECO:0007669"/>
    <property type="project" value="UniProtKB-UniRule"/>
</dbReference>
<dbReference type="HAMAP" id="MF_00437">
    <property type="entry name" value="Ycf4"/>
    <property type="match status" value="1"/>
</dbReference>
<dbReference type="InterPro" id="IPR003359">
    <property type="entry name" value="PSI_Ycf4_assembly"/>
</dbReference>
<dbReference type="NCBIfam" id="NF002712">
    <property type="entry name" value="PRK02542.1"/>
    <property type="match status" value="1"/>
</dbReference>
<dbReference type="Pfam" id="PF02392">
    <property type="entry name" value="Ycf4"/>
    <property type="match status" value="1"/>
</dbReference>
<keyword id="KW-0472">Membrane</keyword>
<keyword id="KW-0602">Photosynthesis</keyword>
<keyword id="KW-1185">Reference proteome</keyword>
<keyword id="KW-0793">Thylakoid</keyword>
<keyword id="KW-0812">Transmembrane</keyword>
<keyword id="KW-1133">Transmembrane helix</keyword>
<feature type="chain" id="PRO_0000325989" description="Photosystem I assembly protein Ycf4">
    <location>
        <begin position="1"/>
        <end position="178"/>
    </location>
</feature>
<feature type="transmembrane region" description="Helical" evidence="1">
    <location>
        <begin position="19"/>
        <end position="39"/>
    </location>
</feature>
<feature type="transmembrane region" description="Helical" evidence="1">
    <location>
        <begin position="61"/>
        <end position="81"/>
    </location>
</feature>
<evidence type="ECO:0000255" key="1">
    <source>
        <dbReference type="HAMAP-Rule" id="MF_00437"/>
    </source>
</evidence>
<comment type="function">
    <text evidence="1">Seems to be required for the assembly of the photosystem I complex.</text>
</comment>
<comment type="subcellular location">
    <subcellularLocation>
        <location evidence="1">Cellular thylakoid membrane</location>
        <topology evidence="1">Multi-pass membrane protein</topology>
    </subcellularLocation>
</comment>
<comment type="similarity">
    <text evidence="1">Belongs to the Ycf4 family.</text>
</comment>
<proteinExistence type="inferred from homology"/>
<protein>
    <recommendedName>
        <fullName evidence="1">Photosystem I assembly protein Ycf4</fullName>
    </recommendedName>
</protein>
<reference key="1">
    <citation type="submission" date="2006-05" db="EMBL/GenBank/DDBJ databases">
        <authorList>
            <consortium name="Genoscope"/>
        </authorList>
    </citation>
    <scope>NUCLEOTIDE SEQUENCE [LARGE SCALE GENOMIC DNA]</scope>
    <source>
        <strain>WH7803</strain>
    </source>
</reference>
<sequence>MAAELLEQPVLGSRRLSNILVAAMVTIGGVGFLFASLSSYLGRDLLPLGHPAGLVFVPQGLVMGLYSIAAALLATYLWAVIAIDVGSGSNRFDKQAGVITISRRGFRKPISVEIPLKDVQAVKVEVRDGFNTRRRVSLRVQGRRDMPLTRVGEPLPLAQLEQDGAELARFLGVNLEGL</sequence>
<accession>A5GMA7</accession>
<name>YCF4_SYNPW</name>
<organism>
    <name type="scientific">Synechococcus sp. (strain WH7803)</name>
    <dbReference type="NCBI Taxonomy" id="32051"/>
    <lineage>
        <taxon>Bacteria</taxon>
        <taxon>Bacillati</taxon>
        <taxon>Cyanobacteriota</taxon>
        <taxon>Cyanophyceae</taxon>
        <taxon>Synechococcales</taxon>
        <taxon>Synechococcaceae</taxon>
        <taxon>Synechococcus</taxon>
    </lineage>
</organism>